<proteinExistence type="inferred from homology"/>
<gene>
    <name evidence="1" type="primary">rpmG2</name>
    <name type="ordered locus">BcerKBAB4_4119</name>
</gene>
<evidence type="ECO:0000255" key="1">
    <source>
        <dbReference type="HAMAP-Rule" id="MF_00294"/>
    </source>
</evidence>
<protein>
    <recommendedName>
        <fullName evidence="1">Large ribosomal subunit protein bL33B</fullName>
    </recommendedName>
    <alternativeName>
        <fullName evidence="1">50S ribosomal protein L33 2</fullName>
    </alternativeName>
</protein>
<name>RL332_BACMK</name>
<keyword id="KW-0687">Ribonucleoprotein</keyword>
<keyword id="KW-0689">Ribosomal protein</keyword>
<dbReference type="EMBL" id="CP000903">
    <property type="protein sequence ID" value="ABY45281.1"/>
    <property type="molecule type" value="Genomic_DNA"/>
</dbReference>
<dbReference type="SMR" id="A9VH49"/>
<dbReference type="KEGG" id="bwe:BcerKBAB4_4119"/>
<dbReference type="eggNOG" id="COG0267">
    <property type="taxonomic scope" value="Bacteria"/>
</dbReference>
<dbReference type="HOGENOM" id="CLU_190949_0_2_9"/>
<dbReference type="Proteomes" id="UP000002154">
    <property type="component" value="Chromosome"/>
</dbReference>
<dbReference type="GO" id="GO:0005737">
    <property type="term" value="C:cytoplasm"/>
    <property type="evidence" value="ECO:0007669"/>
    <property type="project" value="UniProtKB-ARBA"/>
</dbReference>
<dbReference type="GO" id="GO:1990904">
    <property type="term" value="C:ribonucleoprotein complex"/>
    <property type="evidence" value="ECO:0007669"/>
    <property type="project" value="UniProtKB-KW"/>
</dbReference>
<dbReference type="GO" id="GO:0005840">
    <property type="term" value="C:ribosome"/>
    <property type="evidence" value="ECO:0007669"/>
    <property type="project" value="UniProtKB-KW"/>
</dbReference>
<dbReference type="GO" id="GO:0003735">
    <property type="term" value="F:structural constituent of ribosome"/>
    <property type="evidence" value="ECO:0007669"/>
    <property type="project" value="InterPro"/>
</dbReference>
<dbReference type="GO" id="GO:0006412">
    <property type="term" value="P:translation"/>
    <property type="evidence" value="ECO:0007669"/>
    <property type="project" value="UniProtKB-UniRule"/>
</dbReference>
<dbReference type="Gene3D" id="2.20.28.120">
    <property type="entry name" value="Ribosomal protein L33"/>
    <property type="match status" value="1"/>
</dbReference>
<dbReference type="HAMAP" id="MF_00294">
    <property type="entry name" value="Ribosomal_bL33"/>
    <property type="match status" value="1"/>
</dbReference>
<dbReference type="InterPro" id="IPR001705">
    <property type="entry name" value="Ribosomal_bL33"/>
</dbReference>
<dbReference type="InterPro" id="IPR018264">
    <property type="entry name" value="Ribosomal_bL33_CS"/>
</dbReference>
<dbReference type="InterPro" id="IPR038584">
    <property type="entry name" value="Ribosomal_bL33_sf"/>
</dbReference>
<dbReference type="InterPro" id="IPR011332">
    <property type="entry name" value="Ribosomal_zn-bd"/>
</dbReference>
<dbReference type="NCBIfam" id="NF001764">
    <property type="entry name" value="PRK00504.1"/>
    <property type="match status" value="1"/>
</dbReference>
<dbReference type="NCBIfam" id="NF001860">
    <property type="entry name" value="PRK00595.1"/>
    <property type="match status" value="1"/>
</dbReference>
<dbReference type="NCBIfam" id="TIGR01023">
    <property type="entry name" value="rpmG_bact"/>
    <property type="match status" value="1"/>
</dbReference>
<dbReference type="PANTHER" id="PTHR43168">
    <property type="entry name" value="50S RIBOSOMAL PROTEIN L33, CHLOROPLASTIC"/>
    <property type="match status" value="1"/>
</dbReference>
<dbReference type="PANTHER" id="PTHR43168:SF2">
    <property type="entry name" value="LARGE RIBOSOMAL SUBUNIT PROTEIN BL33C"/>
    <property type="match status" value="1"/>
</dbReference>
<dbReference type="Pfam" id="PF00471">
    <property type="entry name" value="Ribosomal_L33"/>
    <property type="match status" value="1"/>
</dbReference>
<dbReference type="SUPFAM" id="SSF57829">
    <property type="entry name" value="Zn-binding ribosomal proteins"/>
    <property type="match status" value="1"/>
</dbReference>
<dbReference type="PROSITE" id="PS00582">
    <property type="entry name" value="RIBOSOMAL_L33"/>
    <property type="match status" value="1"/>
</dbReference>
<feature type="chain" id="PRO_0000356399" description="Large ribosomal subunit protein bL33B">
    <location>
        <begin position="1"/>
        <end position="49"/>
    </location>
</feature>
<sequence length="49" mass="5886">MRVNITLACTECGDRNYISKKNKRNNAERIELKKYCKRDKKSTLHRETK</sequence>
<accession>A9VH49</accession>
<reference key="1">
    <citation type="journal article" date="2008" name="Chem. Biol. Interact.">
        <title>Extending the Bacillus cereus group genomics to putative food-borne pathogens of different toxicity.</title>
        <authorList>
            <person name="Lapidus A."/>
            <person name="Goltsman E."/>
            <person name="Auger S."/>
            <person name="Galleron N."/>
            <person name="Segurens B."/>
            <person name="Dossat C."/>
            <person name="Land M.L."/>
            <person name="Broussolle V."/>
            <person name="Brillard J."/>
            <person name="Guinebretiere M.-H."/>
            <person name="Sanchis V."/>
            <person name="Nguen-the C."/>
            <person name="Lereclus D."/>
            <person name="Richardson P."/>
            <person name="Wincker P."/>
            <person name="Weissenbach J."/>
            <person name="Ehrlich S.D."/>
            <person name="Sorokin A."/>
        </authorList>
    </citation>
    <scope>NUCLEOTIDE SEQUENCE [LARGE SCALE GENOMIC DNA]</scope>
    <source>
        <strain>KBAB4</strain>
    </source>
</reference>
<comment type="similarity">
    <text evidence="1">Belongs to the bacterial ribosomal protein bL33 family.</text>
</comment>
<organism>
    <name type="scientific">Bacillus mycoides (strain KBAB4)</name>
    <name type="common">Bacillus weihenstephanensis</name>
    <dbReference type="NCBI Taxonomy" id="315730"/>
    <lineage>
        <taxon>Bacteria</taxon>
        <taxon>Bacillati</taxon>
        <taxon>Bacillota</taxon>
        <taxon>Bacilli</taxon>
        <taxon>Bacillales</taxon>
        <taxon>Bacillaceae</taxon>
        <taxon>Bacillus</taxon>
        <taxon>Bacillus cereus group</taxon>
    </lineage>
</organism>